<keyword id="KW-0963">Cytoplasm</keyword>
<keyword id="KW-0378">Hydrolase</keyword>
<keyword id="KW-0546">Nucleotide metabolism</keyword>
<proteinExistence type="inferred from homology"/>
<gene>
    <name type="ordered locus">XF_1124</name>
</gene>
<organism>
    <name type="scientific">Xylella fastidiosa (strain 9a5c)</name>
    <dbReference type="NCBI Taxonomy" id="160492"/>
    <lineage>
        <taxon>Bacteria</taxon>
        <taxon>Pseudomonadati</taxon>
        <taxon>Pseudomonadota</taxon>
        <taxon>Gammaproteobacteria</taxon>
        <taxon>Lysobacterales</taxon>
        <taxon>Lysobacteraceae</taxon>
        <taxon>Xylella</taxon>
    </lineage>
</organism>
<feature type="chain" id="PRO_0000123080" description="Nucleoside triphosphate pyrophosphatase">
    <location>
        <begin position="1"/>
        <end position="189"/>
    </location>
</feature>
<feature type="active site" description="Proton acceptor" evidence="1">
    <location>
        <position position="70"/>
    </location>
</feature>
<dbReference type="EC" id="3.6.1.9" evidence="1"/>
<dbReference type="EMBL" id="AE003849">
    <property type="protein sequence ID" value="AAF83934.1"/>
    <property type="status" value="ALT_INIT"/>
    <property type="molecule type" value="Genomic_DNA"/>
</dbReference>
<dbReference type="PIR" id="A82721">
    <property type="entry name" value="A82721"/>
</dbReference>
<dbReference type="RefSeq" id="WP_031336916.1">
    <property type="nucleotide sequence ID" value="NC_002488.3"/>
</dbReference>
<dbReference type="SMR" id="Q9PEA4"/>
<dbReference type="STRING" id="160492.XF_1124"/>
<dbReference type="KEGG" id="xfa:XF_1124"/>
<dbReference type="eggNOG" id="COG0424">
    <property type="taxonomic scope" value="Bacteria"/>
</dbReference>
<dbReference type="HOGENOM" id="CLU_040416_2_1_6"/>
<dbReference type="Proteomes" id="UP000000812">
    <property type="component" value="Chromosome"/>
</dbReference>
<dbReference type="GO" id="GO:0005737">
    <property type="term" value="C:cytoplasm"/>
    <property type="evidence" value="ECO:0007669"/>
    <property type="project" value="UniProtKB-SubCell"/>
</dbReference>
<dbReference type="GO" id="GO:0047429">
    <property type="term" value="F:nucleoside triphosphate diphosphatase activity"/>
    <property type="evidence" value="ECO:0007669"/>
    <property type="project" value="UniProtKB-EC"/>
</dbReference>
<dbReference type="GO" id="GO:0009117">
    <property type="term" value="P:nucleotide metabolic process"/>
    <property type="evidence" value="ECO:0007669"/>
    <property type="project" value="UniProtKB-KW"/>
</dbReference>
<dbReference type="CDD" id="cd00555">
    <property type="entry name" value="Maf"/>
    <property type="match status" value="1"/>
</dbReference>
<dbReference type="Gene3D" id="3.90.950.10">
    <property type="match status" value="1"/>
</dbReference>
<dbReference type="HAMAP" id="MF_00528">
    <property type="entry name" value="Maf"/>
    <property type="match status" value="1"/>
</dbReference>
<dbReference type="InterPro" id="IPR029001">
    <property type="entry name" value="ITPase-like_fam"/>
</dbReference>
<dbReference type="InterPro" id="IPR003697">
    <property type="entry name" value="Maf-like"/>
</dbReference>
<dbReference type="NCBIfam" id="TIGR00172">
    <property type="entry name" value="maf"/>
    <property type="match status" value="1"/>
</dbReference>
<dbReference type="NCBIfam" id="NF003403">
    <property type="entry name" value="PRK04694.1"/>
    <property type="match status" value="1"/>
</dbReference>
<dbReference type="PANTHER" id="PTHR43213">
    <property type="entry name" value="BIFUNCTIONAL DTTP/UTP PYROPHOSPHATASE/METHYLTRANSFERASE PROTEIN-RELATED"/>
    <property type="match status" value="1"/>
</dbReference>
<dbReference type="PANTHER" id="PTHR43213:SF5">
    <property type="entry name" value="BIFUNCTIONAL DTTP_UTP PYROPHOSPHATASE_METHYLTRANSFERASE PROTEIN-RELATED"/>
    <property type="match status" value="1"/>
</dbReference>
<dbReference type="Pfam" id="PF02545">
    <property type="entry name" value="Maf"/>
    <property type="match status" value="1"/>
</dbReference>
<dbReference type="PIRSF" id="PIRSF006305">
    <property type="entry name" value="Maf"/>
    <property type="match status" value="1"/>
</dbReference>
<dbReference type="SUPFAM" id="SSF52972">
    <property type="entry name" value="ITPase-like"/>
    <property type="match status" value="1"/>
</dbReference>
<evidence type="ECO:0000255" key="1">
    <source>
        <dbReference type="HAMAP-Rule" id="MF_00528"/>
    </source>
</evidence>
<evidence type="ECO:0000305" key="2"/>
<name>NTPP_XYLFA</name>
<protein>
    <recommendedName>
        <fullName evidence="1">Nucleoside triphosphate pyrophosphatase</fullName>
        <ecNumber evidence="1">3.6.1.9</ecNumber>
    </recommendedName>
    <alternativeName>
        <fullName evidence="1">Nucleotide pyrophosphatase</fullName>
        <shortName evidence="1">Nucleotide PPase</shortName>
    </alternativeName>
</protein>
<reference key="1">
    <citation type="journal article" date="2000" name="Nature">
        <title>The genome sequence of the plant pathogen Xylella fastidiosa.</title>
        <authorList>
            <person name="Simpson A.J.G."/>
            <person name="Reinach F.C."/>
            <person name="Arruda P."/>
            <person name="Abreu F.A."/>
            <person name="Acencio M."/>
            <person name="Alvarenga R."/>
            <person name="Alves L.M.C."/>
            <person name="Araya J.E."/>
            <person name="Baia G.S."/>
            <person name="Baptista C.S."/>
            <person name="Barros M.H."/>
            <person name="Bonaccorsi E.D."/>
            <person name="Bordin S."/>
            <person name="Bove J.M."/>
            <person name="Briones M.R.S."/>
            <person name="Bueno M.R.P."/>
            <person name="Camargo A.A."/>
            <person name="Camargo L.E.A."/>
            <person name="Carraro D.M."/>
            <person name="Carrer H."/>
            <person name="Colauto N.B."/>
            <person name="Colombo C."/>
            <person name="Costa F.F."/>
            <person name="Costa M.C.R."/>
            <person name="Costa-Neto C.M."/>
            <person name="Coutinho L.L."/>
            <person name="Cristofani M."/>
            <person name="Dias-Neto E."/>
            <person name="Docena C."/>
            <person name="El-Dorry H."/>
            <person name="Facincani A.P."/>
            <person name="Ferreira A.J.S."/>
            <person name="Ferreira V.C.A."/>
            <person name="Ferro J.A."/>
            <person name="Fraga J.S."/>
            <person name="Franca S.C."/>
            <person name="Franco M.C."/>
            <person name="Frohme M."/>
            <person name="Furlan L.R."/>
            <person name="Garnier M."/>
            <person name="Goldman G.H."/>
            <person name="Goldman M.H.S."/>
            <person name="Gomes S.L."/>
            <person name="Gruber A."/>
            <person name="Ho P.L."/>
            <person name="Hoheisel J.D."/>
            <person name="Junqueira M.L."/>
            <person name="Kemper E.L."/>
            <person name="Kitajima J.P."/>
            <person name="Krieger J.E."/>
            <person name="Kuramae E.E."/>
            <person name="Laigret F."/>
            <person name="Lambais M.R."/>
            <person name="Leite L.C.C."/>
            <person name="Lemos E.G.M."/>
            <person name="Lemos M.V.F."/>
            <person name="Lopes S.A."/>
            <person name="Lopes C.R."/>
            <person name="Machado J.A."/>
            <person name="Machado M.A."/>
            <person name="Madeira A.M.B.N."/>
            <person name="Madeira H.M.F."/>
            <person name="Marino C.L."/>
            <person name="Marques M.V."/>
            <person name="Martins E.A.L."/>
            <person name="Martins E.M.F."/>
            <person name="Matsukuma A.Y."/>
            <person name="Menck C.F.M."/>
            <person name="Miracca E.C."/>
            <person name="Miyaki C.Y."/>
            <person name="Monteiro-Vitorello C.B."/>
            <person name="Moon D.H."/>
            <person name="Nagai M.A."/>
            <person name="Nascimento A.L.T.O."/>
            <person name="Netto L.E.S."/>
            <person name="Nhani A. Jr."/>
            <person name="Nobrega F.G."/>
            <person name="Nunes L.R."/>
            <person name="Oliveira M.A."/>
            <person name="de Oliveira M.C."/>
            <person name="de Oliveira R.C."/>
            <person name="Palmieri D.A."/>
            <person name="Paris A."/>
            <person name="Peixoto B.R."/>
            <person name="Pereira G.A.G."/>
            <person name="Pereira H.A. Jr."/>
            <person name="Pesquero J.B."/>
            <person name="Quaggio R.B."/>
            <person name="Roberto P.G."/>
            <person name="Rodrigues V."/>
            <person name="de Rosa A.J.M."/>
            <person name="de Rosa V.E. Jr."/>
            <person name="de Sa R.G."/>
            <person name="Santelli R.V."/>
            <person name="Sawasaki H.E."/>
            <person name="da Silva A.C.R."/>
            <person name="da Silva A.M."/>
            <person name="da Silva F.R."/>
            <person name="Silva W.A. Jr."/>
            <person name="da Silveira J.F."/>
            <person name="Silvestri M.L.Z."/>
            <person name="Siqueira W.J."/>
            <person name="de Souza A.A."/>
            <person name="de Souza A.P."/>
            <person name="Terenzi M.F."/>
            <person name="Truffi D."/>
            <person name="Tsai S.M."/>
            <person name="Tsuhako M.H."/>
            <person name="Vallada H."/>
            <person name="Van Sluys M.A."/>
            <person name="Verjovski-Almeida S."/>
            <person name="Vettore A.L."/>
            <person name="Zago M.A."/>
            <person name="Zatz M."/>
            <person name="Meidanis J."/>
            <person name="Setubal J.C."/>
        </authorList>
    </citation>
    <scope>NUCLEOTIDE SEQUENCE [LARGE SCALE GENOMIC DNA]</scope>
    <source>
        <strain>9a5c</strain>
    </source>
</reference>
<sequence>MLYLASRSLCRRQLLQRLDIPFQVIDLEIPEVRREDELPQDYVRRVAQEKAQVGLARVRDAFAPKVLGADTEVVLDGRVFGKPADLVEAAAMLAALSGRTHQVMTAVSLVAAGGVAAQVLVVSEVSFALLSQGQIARYVDSGEPMGKAGAYAIQGRGECFVSRLVGSYSGVMGLPLQQTAQLLTTFEES</sequence>
<comment type="function">
    <text evidence="1">Nucleoside triphosphate pyrophosphatase. May have a dual role in cell division arrest and in preventing the incorporation of modified nucleotides into cellular nucleic acids.</text>
</comment>
<comment type="catalytic activity">
    <reaction evidence="1">
        <text>a ribonucleoside 5'-triphosphate + H2O = a ribonucleoside 5'-phosphate + diphosphate + H(+)</text>
        <dbReference type="Rhea" id="RHEA:23996"/>
        <dbReference type="ChEBI" id="CHEBI:15377"/>
        <dbReference type="ChEBI" id="CHEBI:15378"/>
        <dbReference type="ChEBI" id="CHEBI:33019"/>
        <dbReference type="ChEBI" id="CHEBI:58043"/>
        <dbReference type="ChEBI" id="CHEBI:61557"/>
        <dbReference type="EC" id="3.6.1.9"/>
    </reaction>
</comment>
<comment type="catalytic activity">
    <reaction evidence="1">
        <text>a 2'-deoxyribonucleoside 5'-triphosphate + H2O = a 2'-deoxyribonucleoside 5'-phosphate + diphosphate + H(+)</text>
        <dbReference type="Rhea" id="RHEA:44644"/>
        <dbReference type="ChEBI" id="CHEBI:15377"/>
        <dbReference type="ChEBI" id="CHEBI:15378"/>
        <dbReference type="ChEBI" id="CHEBI:33019"/>
        <dbReference type="ChEBI" id="CHEBI:61560"/>
        <dbReference type="ChEBI" id="CHEBI:65317"/>
        <dbReference type="EC" id="3.6.1.9"/>
    </reaction>
</comment>
<comment type="cofactor">
    <cofactor evidence="1">
        <name>a divalent metal cation</name>
        <dbReference type="ChEBI" id="CHEBI:60240"/>
    </cofactor>
</comment>
<comment type="subcellular location">
    <subcellularLocation>
        <location evidence="1">Cytoplasm</location>
    </subcellularLocation>
</comment>
<comment type="similarity">
    <text evidence="1">Belongs to the Maf family.</text>
</comment>
<comment type="sequence caution" evidence="2">
    <conflict type="erroneous initiation">
        <sequence resource="EMBL-CDS" id="AAF83934"/>
    </conflict>
</comment>
<accession>Q9PEA4</accession>